<feature type="chain" id="PRO_0000236462" description="Small ribosomal subunit protein bS20">
    <location>
        <begin position="1"/>
        <end position="89"/>
    </location>
</feature>
<evidence type="ECO:0000255" key="1">
    <source>
        <dbReference type="HAMAP-Rule" id="MF_00500"/>
    </source>
</evidence>
<evidence type="ECO:0000305" key="2"/>
<proteinExistence type="inferred from homology"/>
<reference key="1">
    <citation type="journal article" date="2007" name="Proc. Natl. Acad. Sci. U.S.A.">
        <title>The genome of Syntrophus aciditrophicus: life at the thermodynamic limit of microbial growth.</title>
        <authorList>
            <person name="McInerney M.J."/>
            <person name="Rohlin L."/>
            <person name="Mouttaki H."/>
            <person name="Kim U."/>
            <person name="Krupp R.S."/>
            <person name="Rios-Hernandez L."/>
            <person name="Sieber J."/>
            <person name="Struchtemeyer C.G."/>
            <person name="Bhattacharyya A."/>
            <person name="Campbell J.W."/>
            <person name="Gunsalus R.P."/>
        </authorList>
    </citation>
    <scope>NUCLEOTIDE SEQUENCE [LARGE SCALE GENOMIC DNA]</scope>
    <source>
        <strain>SB</strain>
    </source>
</reference>
<accession>Q2LQK7</accession>
<protein>
    <recommendedName>
        <fullName evidence="1">Small ribosomal subunit protein bS20</fullName>
    </recommendedName>
    <alternativeName>
        <fullName evidence="2">30S ribosomal protein S20</fullName>
    </alternativeName>
</protein>
<comment type="function">
    <text evidence="1">Binds directly to 16S ribosomal RNA.</text>
</comment>
<comment type="similarity">
    <text evidence="1">Belongs to the bacterial ribosomal protein bS20 family.</text>
</comment>
<keyword id="KW-1185">Reference proteome</keyword>
<keyword id="KW-0687">Ribonucleoprotein</keyword>
<keyword id="KW-0689">Ribosomal protein</keyword>
<keyword id="KW-0694">RNA-binding</keyword>
<keyword id="KW-0699">rRNA-binding</keyword>
<name>RS20_SYNAS</name>
<organism>
    <name type="scientific">Syntrophus aciditrophicus (strain SB)</name>
    <dbReference type="NCBI Taxonomy" id="56780"/>
    <lineage>
        <taxon>Bacteria</taxon>
        <taxon>Pseudomonadati</taxon>
        <taxon>Thermodesulfobacteriota</taxon>
        <taxon>Syntrophia</taxon>
        <taxon>Syntrophales</taxon>
        <taxon>Syntrophaceae</taxon>
        <taxon>Syntrophus</taxon>
    </lineage>
</organism>
<dbReference type="EMBL" id="CP000252">
    <property type="protein sequence ID" value="ABC76056.1"/>
    <property type="molecule type" value="Genomic_DNA"/>
</dbReference>
<dbReference type="RefSeq" id="WP_011416091.1">
    <property type="nucleotide sequence ID" value="NC_007759.1"/>
</dbReference>
<dbReference type="SMR" id="Q2LQK7"/>
<dbReference type="FunCoup" id="Q2LQK7">
    <property type="interactions" value="495"/>
</dbReference>
<dbReference type="STRING" id="56780.SYN_02376"/>
<dbReference type="KEGG" id="sat:SYN_02376"/>
<dbReference type="eggNOG" id="COG0268">
    <property type="taxonomic scope" value="Bacteria"/>
</dbReference>
<dbReference type="HOGENOM" id="CLU_160655_3_1_7"/>
<dbReference type="InParanoid" id="Q2LQK7"/>
<dbReference type="OrthoDB" id="9807974at2"/>
<dbReference type="Proteomes" id="UP000001933">
    <property type="component" value="Chromosome"/>
</dbReference>
<dbReference type="GO" id="GO:0005829">
    <property type="term" value="C:cytosol"/>
    <property type="evidence" value="ECO:0007669"/>
    <property type="project" value="TreeGrafter"/>
</dbReference>
<dbReference type="GO" id="GO:0015935">
    <property type="term" value="C:small ribosomal subunit"/>
    <property type="evidence" value="ECO:0007669"/>
    <property type="project" value="TreeGrafter"/>
</dbReference>
<dbReference type="GO" id="GO:0070181">
    <property type="term" value="F:small ribosomal subunit rRNA binding"/>
    <property type="evidence" value="ECO:0007669"/>
    <property type="project" value="TreeGrafter"/>
</dbReference>
<dbReference type="GO" id="GO:0003735">
    <property type="term" value="F:structural constituent of ribosome"/>
    <property type="evidence" value="ECO:0007669"/>
    <property type="project" value="InterPro"/>
</dbReference>
<dbReference type="GO" id="GO:0006412">
    <property type="term" value="P:translation"/>
    <property type="evidence" value="ECO:0007669"/>
    <property type="project" value="UniProtKB-UniRule"/>
</dbReference>
<dbReference type="FunFam" id="1.20.58.110:FF:000001">
    <property type="entry name" value="30S ribosomal protein S20"/>
    <property type="match status" value="1"/>
</dbReference>
<dbReference type="Gene3D" id="1.20.58.110">
    <property type="entry name" value="Ribosomal protein S20"/>
    <property type="match status" value="1"/>
</dbReference>
<dbReference type="HAMAP" id="MF_00500">
    <property type="entry name" value="Ribosomal_bS20"/>
    <property type="match status" value="1"/>
</dbReference>
<dbReference type="InterPro" id="IPR002583">
    <property type="entry name" value="Ribosomal_bS20"/>
</dbReference>
<dbReference type="InterPro" id="IPR036510">
    <property type="entry name" value="Ribosomal_bS20_sf"/>
</dbReference>
<dbReference type="NCBIfam" id="TIGR00029">
    <property type="entry name" value="S20"/>
    <property type="match status" value="1"/>
</dbReference>
<dbReference type="PANTHER" id="PTHR33398">
    <property type="entry name" value="30S RIBOSOMAL PROTEIN S20"/>
    <property type="match status" value="1"/>
</dbReference>
<dbReference type="PANTHER" id="PTHR33398:SF1">
    <property type="entry name" value="SMALL RIBOSOMAL SUBUNIT PROTEIN BS20C"/>
    <property type="match status" value="1"/>
</dbReference>
<dbReference type="Pfam" id="PF01649">
    <property type="entry name" value="Ribosomal_S20p"/>
    <property type="match status" value="1"/>
</dbReference>
<dbReference type="SUPFAM" id="SSF46992">
    <property type="entry name" value="Ribosomal protein S20"/>
    <property type="match status" value="1"/>
</dbReference>
<gene>
    <name evidence="1" type="primary">rpsT</name>
    <name type="ordered locus">SYNAS_01770</name>
    <name type="ORF">SYN_02376</name>
</gene>
<sequence>MATHKSAEKRSRQIEKRRIRNVSIRSKVKTYIKSVLTAIEAKDKEGAQSALQQAIPVIAKAGAKGVYHQKTASRHISRLTRKVNAQVAE</sequence>